<comment type="function">
    <text evidence="1">Nucleoside triphosphate pyrophosphatase that hydrolyzes dTTP and UTP. May have a dual role in cell division arrest and in preventing the incorporation of modified nucleotides into cellular nucleic acids.</text>
</comment>
<comment type="catalytic activity">
    <reaction evidence="1">
        <text>dTTP + H2O = dTMP + diphosphate + H(+)</text>
        <dbReference type="Rhea" id="RHEA:28534"/>
        <dbReference type="ChEBI" id="CHEBI:15377"/>
        <dbReference type="ChEBI" id="CHEBI:15378"/>
        <dbReference type="ChEBI" id="CHEBI:33019"/>
        <dbReference type="ChEBI" id="CHEBI:37568"/>
        <dbReference type="ChEBI" id="CHEBI:63528"/>
        <dbReference type="EC" id="3.6.1.9"/>
    </reaction>
</comment>
<comment type="catalytic activity">
    <reaction evidence="1">
        <text>UTP + H2O = UMP + diphosphate + H(+)</text>
        <dbReference type="Rhea" id="RHEA:29395"/>
        <dbReference type="ChEBI" id="CHEBI:15377"/>
        <dbReference type="ChEBI" id="CHEBI:15378"/>
        <dbReference type="ChEBI" id="CHEBI:33019"/>
        <dbReference type="ChEBI" id="CHEBI:46398"/>
        <dbReference type="ChEBI" id="CHEBI:57865"/>
        <dbReference type="EC" id="3.6.1.9"/>
    </reaction>
</comment>
<comment type="cofactor">
    <cofactor evidence="1">
        <name>a divalent metal cation</name>
        <dbReference type="ChEBI" id="CHEBI:60240"/>
    </cofactor>
</comment>
<comment type="subcellular location">
    <subcellularLocation>
        <location evidence="1">Cytoplasm</location>
    </subcellularLocation>
</comment>
<comment type="similarity">
    <text evidence="1">Belongs to the Maf family. YhdE subfamily.</text>
</comment>
<evidence type="ECO:0000255" key="1">
    <source>
        <dbReference type="HAMAP-Rule" id="MF_00528"/>
    </source>
</evidence>
<feature type="chain" id="PRO_0000267238" description="dTTP/UTP pyrophosphatase">
    <location>
        <begin position="1"/>
        <end position="193"/>
    </location>
</feature>
<feature type="active site" description="Proton acceptor" evidence="1">
    <location>
        <position position="70"/>
    </location>
</feature>
<feature type="site" description="Important for substrate specificity" evidence="1">
    <location>
        <position position="11"/>
    </location>
</feature>
<feature type="site" description="Important for substrate specificity" evidence="1">
    <location>
        <position position="71"/>
    </location>
</feature>
<feature type="site" description="Important for substrate specificity" evidence="1">
    <location>
        <position position="153"/>
    </location>
</feature>
<gene>
    <name type="ordered locus">ABO_0533</name>
</gene>
<name>NTPPA_ALCBS</name>
<dbReference type="EC" id="3.6.1.9" evidence="1"/>
<dbReference type="EMBL" id="AM286690">
    <property type="protein sequence ID" value="CAL15981.1"/>
    <property type="molecule type" value="Genomic_DNA"/>
</dbReference>
<dbReference type="RefSeq" id="WP_011587819.1">
    <property type="nucleotide sequence ID" value="NC_008260.1"/>
</dbReference>
<dbReference type="SMR" id="Q0VS67"/>
<dbReference type="STRING" id="393595.ABO_0533"/>
<dbReference type="KEGG" id="abo:ABO_0533"/>
<dbReference type="eggNOG" id="COG0424">
    <property type="taxonomic scope" value="Bacteria"/>
</dbReference>
<dbReference type="HOGENOM" id="CLU_040416_2_1_6"/>
<dbReference type="OrthoDB" id="9807767at2"/>
<dbReference type="Proteomes" id="UP000008871">
    <property type="component" value="Chromosome"/>
</dbReference>
<dbReference type="GO" id="GO:0005737">
    <property type="term" value="C:cytoplasm"/>
    <property type="evidence" value="ECO:0007669"/>
    <property type="project" value="UniProtKB-SubCell"/>
</dbReference>
<dbReference type="GO" id="GO:0036218">
    <property type="term" value="F:dTTP diphosphatase activity"/>
    <property type="evidence" value="ECO:0007669"/>
    <property type="project" value="RHEA"/>
</dbReference>
<dbReference type="GO" id="GO:0036221">
    <property type="term" value="F:UTP diphosphatase activity"/>
    <property type="evidence" value="ECO:0007669"/>
    <property type="project" value="RHEA"/>
</dbReference>
<dbReference type="GO" id="GO:0009117">
    <property type="term" value="P:nucleotide metabolic process"/>
    <property type="evidence" value="ECO:0007669"/>
    <property type="project" value="UniProtKB-KW"/>
</dbReference>
<dbReference type="CDD" id="cd00555">
    <property type="entry name" value="Maf"/>
    <property type="match status" value="1"/>
</dbReference>
<dbReference type="Gene3D" id="3.90.950.10">
    <property type="match status" value="1"/>
</dbReference>
<dbReference type="HAMAP" id="MF_00528">
    <property type="entry name" value="Maf"/>
    <property type="match status" value="1"/>
</dbReference>
<dbReference type="InterPro" id="IPR029001">
    <property type="entry name" value="ITPase-like_fam"/>
</dbReference>
<dbReference type="InterPro" id="IPR003697">
    <property type="entry name" value="Maf-like"/>
</dbReference>
<dbReference type="NCBIfam" id="TIGR00172">
    <property type="entry name" value="maf"/>
    <property type="match status" value="1"/>
</dbReference>
<dbReference type="PANTHER" id="PTHR43213">
    <property type="entry name" value="BIFUNCTIONAL DTTP/UTP PYROPHOSPHATASE/METHYLTRANSFERASE PROTEIN-RELATED"/>
    <property type="match status" value="1"/>
</dbReference>
<dbReference type="PANTHER" id="PTHR43213:SF5">
    <property type="entry name" value="BIFUNCTIONAL DTTP_UTP PYROPHOSPHATASE_METHYLTRANSFERASE PROTEIN-RELATED"/>
    <property type="match status" value="1"/>
</dbReference>
<dbReference type="Pfam" id="PF02545">
    <property type="entry name" value="Maf"/>
    <property type="match status" value="1"/>
</dbReference>
<dbReference type="PIRSF" id="PIRSF006305">
    <property type="entry name" value="Maf"/>
    <property type="match status" value="1"/>
</dbReference>
<dbReference type="SUPFAM" id="SSF52972">
    <property type="entry name" value="ITPase-like"/>
    <property type="match status" value="1"/>
</dbReference>
<sequence>MILYLASGSPRRAELLQQIAVPFTVLPAPSIDETPRSAEAAVDYVRRMAREKALVGQARMPTPGAVLGADTAVVLGDQILGKPADDTEALAMLTQLSGTSHQVISAVCVCSEGRQAVRHTVTTVQFRPFEAARLEVYVATGEGRDKAGSYGIQGLGGALVESLSGSYSGVVGLPLEQTVELLEWADIPYWQID</sequence>
<keyword id="KW-0963">Cytoplasm</keyword>
<keyword id="KW-0378">Hydrolase</keyword>
<keyword id="KW-0546">Nucleotide metabolism</keyword>
<keyword id="KW-1185">Reference proteome</keyword>
<accession>Q0VS67</accession>
<proteinExistence type="inferred from homology"/>
<protein>
    <recommendedName>
        <fullName evidence="1">dTTP/UTP pyrophosphatase</fullName>
        <shortName evidence="1">dTTPase/UTPase</shortName>
        <ecNumber evidence="1">3.6.1.9</ecNumber>
    </recommendedName>
    <alternativeName>
        <fullName evidence="1">Nucleoside triphosphate pyrophosphatase</fullName>
    </alternativeName>
    <alternativeName>
        <fullName evidence="1">Nucleotide pyrophosphatase</fullName>
        <shortName evidence="1">Nucleotide PPase</shortName>
    </alternativeName>
</protein>
<reference key="1">
    <citation type="journal article" date="2006" name="Nat. Biotechnol.">
        <title>Genome sequence of the ubiquitous hydrocarbon-degrading marine bacterium Alcanivorax borkumensis.</title>
        <authorList>
            <person name="Schneiker S."/>
            <person name="Martins dos Santos V.A.P."/>
            <person name="Bartels D."/>
            <person name="Bekel T."/>
            <person name="Brecht M."/>
            <person name="Buhrmester J."/>
            <person name="Chernikova T.N."/>
            <person name="Denaro R."/>
            <person name="Ferrer M."/>
            <person name="Gertler C."/>
            <person name="Goesmann A."/>
            <person name="Golyshina O.V."/>
            <person name="Kaminski F."/>
            <person name="Khachane A.N."/>
            <person name="Lang S."/>
            <person name="Linke B."/>
            <person name="McHardy A.C."/>
            <person name="Meyer F."/>
            <person name="Nechitaylo T."/>
            <person name="Puehler A."/>
            <person name="Regenhardt D."/>
            <person name="Rupp O."/>
            <person name="Sabirova J.S."/>
            <person name="Selbitschka W."/>
            <person name="Yakimov M.M."/>
            <person name="Timmis K.N."/>
            <person name="Vorhoelter F.-J."/>
            <person name="Weidner S."/>
            <person name="Kaiser O."/>
            <person name="Golyshin P.N."/>
        </authorList>
    </citation>
    <scope>NUCLEOTIDE SEQUENCE [LARGE SCALE GENOMIC DNA]</scope>
    <source>
        <strain>ATCC 700651 / DSM 11573 / NCIMB 13689 / SK2</strain>
    </source>
</reference>
<organism>
    <name type="scientific">Alcanivorax borkumensis (strain ATCC 700651 / DSM 11573 / NCIMB 13689 / SK2)</name>
    <dbReference type="NCBI Taxonomy" id="393595"/>
    <lineage>
        <taxon>Bacteria</taxon>
        <taxon>Pseudomonadati</taxon>
        <taxon>Pseudomonadota</taxon>
        <taxon>Gammaproteobacteria</taxon>
        <taxon>Oceanospirillales</taxon>
        <taxon>Alcanivoracaceae</taxon>
        <taxon>Alcanivorax</taxon>
    </lineage>
</organism>